<feature type="chain" id="PRO_0000215427" description="Phenylalanine ammonia-lyase">
    <location>
        <begin position="1" status="less than"/>
        <end position="416"/>
    </location>
</feature>
<feature type="binding site" evidence="3">
    <location>
        <position position="48"/>
    </location>
    <ligand>
        <name>(E)-cinnamate</name>
        <dbReference type="ChEBI" id="CHEBI:15669"/>
    </ligand>
</feature>
<feature type="binding site" evidence="3">
    <location>
        <position position="54"/>
    </location>
    <ligand>
        <name>(E)-cinnamate</name>
        <dbReference type="ChEBI" id="CHEBI:15669"/>
    </ligand>
</feature>
<feature type="binding site" evidence="3">
    <location>
        <position position="84"/>
    </location>
    <ligand>
        <name>(E)-cinnamate</name>
        <dbReference type="ChEBI" id="CHEBI:15669"/>
    </ligand>
</feature>
<feature type="binding site" evidence="1">
    <location>
        <position position="156"/>
    </location>
    <ligand>
        <name>(E)-cinnamate</name>
        <dbReference type="ChEBI" id="CHEBI:15669"/>
    </ligand>
</feature>
<feature type="binding site" evidence="1">
    <location>
        <position position="184"/>
    </location>
    <ligand>
        <name>(E)-cinnamate</name>
        <dbReference type="ChEBI" id="CHEBI:15669"/>
    </ligand>
</feature>
<feature type="binding site" evidence="3">
    <location>
        <position position="187"/>
    </location>
    <ligand>
        <name>(E)-cinnamate</name>
        <dbReference type="ChEBI" id="CHEBI:15669"/>
    </ligand>
</feature>
<feature type="non-terminal residue">
    <location>
        <position position="1"/>
    </location>
</feature>
<name>PALY_VITVI</name>
<evidence type="ECO:0000250" key="1">
    <source>
        <dbReference type="UniProtKB" id="P11544"/>
    </source>
</evidence>
<evidence type="ECO:0000250" key="2">
    <source>
        <dbReference type="UniProtKB" id="P24481"/>
    </source>
</evidence>
<evidence type="ECO:0000250" key="3">
    <source>
        <dbReference type="UniProtKB" id="Q68G84"/>
    </source>
</evidence>
<evidence type="ECO:0000305" key="4"/>
<keyword id="KW-0963">Cytoplasm</keyword>
<keyword id="KW-0456">Lyase</keyword>
<keyword id="KW-0585">Phenylalanine catabolism</keyword>
<keyword id="KW-0587">Phenylpropanoid metabolism</keyword>
<organism>
    <name type="scientific">Vitis vinifera</name>
    <name type="common">Grape</name>
    <dbReference type="NCBI Taxonomy" id="29760"/>
    <lineage>
        <taxon>Eukaryota</taxon>
        <taxon>Viridiplantae</taxon>
        <taxon>Streptophyta</taxon>
        <taxon>Embryophyta</taxon>
        <taxon>Tracheophyta</taxon>
        <taxon>Spermatophyta</taxon>
        <taxon>Magnoliopsida</taxon>
        <taxon>eudicotyledons</taxon>
        <taxon>Gunneridae</taxon>
        <taxon>Pentapetalae</taxon>
        <taxon>rosids</taxon>
        <taxon>Vitales</taxon>
        <taxon>Vitaceae</taxon>
        <taxon>Viteae</taxon>
        <taxon>Vitis</taxon>
    </lineage>
</organism>
<comment type="function">
    <text evidence="2">This is a key enzyme of plant metabolism catalyzing the first reaction in the biosynthesis from L-phenylalanine of a wide variety of natural products based on the phenylpropane skeleton.</text>
</comment>
<comment type="catalytic activity">
    <reaction evidence="2">
        <text>L-phenylalanine = (E)-cinnamate + NH4(+)</text>
        <dbReference type="Rhea" id="RHEA:21384"/>
        <dbReference type="ChEBI" id="CHEBI:15669"/>
        <dbReference type="ChEBI" id="CHEBI:28938"/>
        <dbReference type="ChEBI" id="CHEBI:58095"/>
        <dbReference type="EC" id="4.3.1.24"/>
    </reaction>
</comment>
<comment type="pathway">
    <text evidence="4">Phenylpropanoid metabolism; trans-cinnamate biosynthesis; trans-cinnamate from L-phenylalanine: step 1/1.</text>
</comment>
<comment type="subunit">
    <text evidence="2">Homotetramer.</text>
</comment>
<comment type="subcellular location">
    <subcellularLocation>
        <location evidence="4">Cytoplasm</location>
    </subcellularLocation>
</comment>
<comment type="PTM">
    <text evidence="3">Contains an active site 4-methylidene-imidazol-5-one (MIO), which is formed autocatalytically by cyclization and dehydration of residues Ala-Ser-Gly.</text>
</comment>
<comment type="similarity">
    <text evidence="4">Belongs to the PAL/histidase family.</text>
</comment>
<gene>
    <name type="primary">PAL</name>
</gene>
<protein>
    <recommendedName>
        <fullName>Phenylalanine ammonia-lyase</fullName>
        <ecNumber evidence="2">4.3.1.24</ecNumber>
    </recommendedName>
</protein>
<dbReference type="EC" id="4.3.1.24" evidence="2"/>
<dbReference type="EMBL" id="X75967">
    <property type="protein sequence ID" value="CAA53581.1"/>
    <property type="molecule type" value="mRNA"/>
</dbReference>
<dbReference type="SMR" id="P45735"/>
<dbReference type="PaxDb" id="29760-VIT_16s0039g01170.t01"/>
<dbReference type="eggNOG" id="KOG0222">
    <property type="taxonomic scope" value="Eukaryota"/>
</dbReference>
<dbReference type="BRENDA" id="4.3.1.24">
    <property type="organism ID" value="6671"/>
</dbReference>
<dbReference type="UniPathway" id="UPA00713">
    <property type="reaction ID" value="UER00725"/>
</dbReference>
<dbReference type="ExpressionAtlas" id="P45735">
    <property type="expression patterns" value="baseline and differential"/>
</dbReference>
<dbReference type="GO" id="GO:0005737">
    <property type="term" value="C:cytoplasm"/>
    <property type="evidence" value="ECO:0007669"/>
    <property type="project" value="UniProtKB-SubCell"/>
</dbReference>
<dbReference type="GO" id="GO:0045548">
    <property type="term" value="F:phenylalanine ammonia-lyase activity"/>
    <property type="evidence" value="ECO:0007669"/>
    <property type="project" value="UniProtKB-EC"/>
</dbReference>
<dbReference type="GO" id="GO:0009800">
    <property type="term" value="P:cinnamic acid biosynthetic process"/>
    <property type="evidence" value="ECO:0007669"/>
    <property type="project" value="UniProtKB-UniPathway"/>
</dbReference>
<dbReference type="GO" id="GO:0006559">
    <property type="term" value="P:L-phenylalanine catabolic process"/>
    <property type="evidence" value="ECO:0007669"/>
    <property type="project" value="UniProtKB-KW"/>
</dbReference>
<dbReference type="FunFam" id="1.10.274.20:FF:000001">
    <property type="entry name" value="Phenylalanine ammonia-lyase"/>
    <property type="match status" value="1"/>
</dbReference>
<dbReference type="Gene3D" id="1.20.200.10">
    <property type="entry name" value="Fumarase/aspartase (Central domain)"/>
    <property type="match status" value="1"/>
</dbReference>
<dbReference type="Gene3D" id="1.10.274.20">
    <property type="entry name" value="Phenylalanine ammonia-lyase 1, domain 3"/>
    <property type="match status" value="1"/>
</dbReference>
<dbReference type="InterPro" id="IPR001106">
    <property type="entry name" value="Aromatic_Lyase"/>
</dbReference>
<dbReference type="InterPro" id="IPR008948">
    <property type="entry name" value="L-Aspartase-like"/>
</dbReference>
<dbReference type="InterPro" id="IPR005922">
    <property type="entry name" value="Phe_NH3-lyase"/>
</dbReference>
<dbReference type="InterPro" id="IPR023144">
    <property type="entry name" value="Phe_NH3-lyase_shielding_dom_sf"/>
</dbReference>
<dbReference type="NCBIfam" id="TIGR01226">
    <property type="entry name" value="phe_am_lyase"/>
    <property type="match status" value="1"/>
</dbReference>
<dbReference type="PANTHER" id="PTHR10362">
    <property type="entry name" value="HISTIDINE AMMONIA-LYASE"/>
    <property type="match status" value="1"/>
</dbReference>
<dbReference type="Pfam" id="PF00221">
    <property type="entry name" value="Lyase_aromatic"/>
    <property type="match status" value="1"/>
</dbReference>
<dbReference type="SUPFAM" id="SSF48557">
    <property type="entry name" value="L-aspartase-like"/>
    <property type="match status" value="1"/>
</dbReference>
<accession>P45735</accession>
<sequence>TDHLTHKLKHHPGQIEAAAIMEHILDGSSYVKEAKKLHEMDPLQKPKQDRYALRTSPQWLGPHIEVIRASTKSIEREINSVNDNPLIDVSRNKALHGGNFQGTPIGVSMDNTRLAIAAIGKLMFAQFSELVNDFYNNGLPSNLSGSRNPSLDYGFKGAEIAMASYCSELQFLANPVTNHVESAEQHNQDVNSLGLISSRKTAEAVDILKLMSTTYLVALCQAIDLRHLEENLKSTVKKTVSHVAKKTLTIGANGELHPSRFCEKDLLKVVDREHVFAYIDDPCSATYPLMQKVRQVLVEHALNNGESEKNGSTSIFQKIGAFEEELKAVLPKEVESARDGVESGNPSIPNRIKECRSYPLYKFVREELGTGLLTGEKVRSPGEDFDKVFTAMCEGKIIDPLLDCLSAWNGAPLPIC</sequence>
<reference key="1">
    <citation type="journal article" date="1994" name="Plant Mol. Biol.">
        <title>Cloning and molecular analysis of structural genes involved in flavonoid and stilbene biosynthesis in grape (Vitis vinifera L.).</title>
        <authorList>
            <person name="Sparvoli F."/>
            <person name="Martin C."/>
            <person name="Scienza A."/>
            <person name="Gavazzi G."/>
            <person name="Tonelli C."/>
        </authorList>
    </citation>
    <scope>NUCLEOTIDE SEQUENCE [MRNA]</scope>
</reference>
<proteinExistence type="evidence at transcript level"/>